<proteinExistence type="inferred from homology"/>
<dbReference type="EC" id="3.5.3.23" evidence="1"/>
<dbReference type="EMBL" id="CP000950">
    <property type="protein sequence ID" value="ACA68507.1"/>
    <property type="molecule type" value="Genomic_DNA"/>
</dbReference>
<dbReference type="RefSeq" id="WP_002212029.1">
    <property type="nucleotide sequence ID" value="NZ_CP009792.1"/>
</dbReference>
<dbReference type="SMR" id="B1JMD0"/>
<dbReference type="GeneID" id="49786049"/>
<dbReference type="KEGG" id="ypy:YPK_2226"/>
<dbReference type="PATRIC" id="fig|502800.11.peg.2902"/>
<dbReference type="UniPathway" id="UPA00185">
    <property type="reaction ID" value="UER00280"/>
</dbReference>
<dbReference type="GO" id="GO:0009015">
    <property type="term" value="F:N-succinylarginine dihydrolase activity"/>
    <property type="evidence" value="ECO:0007669"/>
    <property type="project" value="UniProtKB-UniRule"/>
</dbReference>
<dbReference type="GO" id="GO:0019544">
    <property type="term" value="P:arginine catabolic process to glutamate"/>
    <property type="evidence" value="ECO:0007669"/>
    <property type="project" value="UniProtKB-UniRule"/>
</dbReference>
<dbReference type="GO" id="GO:0019545">
    <property type="term" value="P:arginine catabolic process to succinate"/>
    <property type="evidence" value="ECO:0007669"/>
    <property type="project" value="UniProtKB-UniRule"/>
</dbReference>
<dbReference type="Gene3D" id="3.75.10.20">
    <property type="entry name" value="Succinylarginine dihydrolase"/>
    <property type="match status" value="1"/>
</dbReference>
<dbReference type="HAMAP" id="MF_01172">
    <property type="entry name" value="AstB"/>
    <property type="match status" value="1"/>
</dbReference>
<dbReference type="InterPro" id="IPR037031">
    <property type="entry name" value="AstB_sf"/>
</dbReference>
<dbReference type="InterPro" id="IPR007079">
    <property type="entry name" value="SuccinylArg_d-Hdrlase_AstB"/>
</dbReference>
<dbReference type="NCBIfam" id="TIGR03241">
    <property type="entry name" value="arg_catab_astB"/>
    <property type="match status" value="1"/>
</dbReference>
<dbReference type="NCBIfam" id="NF009789">
    <property type="entry name" value="PRK13281.1"/>
    <property type="match status" value="1"/>
</dbReference>
<dbReference type="PANTHER" id="PTHR30420">
    <property type="entry name" value="N-SUCCINYLARGININE DIHYDROLASE"/>
    <property type="match status" value="1"/>
</dbReference>
<dbReference type="PANTHER" id="PTHR30420:SF2">
    <property type="entry name" value="N-SUCCINYLARGININE DIHYDROLASE"/>
    <property type="match status" value="1"/>
</dbReference>
<dbReference type="Pfam" id="PF04996">
    <property type="entry name" value="AstB"/>
    <property type="match status" value="1"/>
</dbReference>
<dbReference type="SUPFAM" id="SSF55909">
    <property type="entry name" value="Pentein"/>
    <property type="match status" value="1"/>
</dbReference>
<name>ASTB_YERPY</name>
<feature type="chain" id="PRO_1000138035" description="N-succinylarginine dihydrolase">
    <location>
        <begin position="1"/>
        <end position="447"/>
    </location>
</feature>
<feature type="active site" evidence="1">
    <location>
        <position position="174"/>
    </location>
</feature>
<feature type="active site" evidence="1">
    <location>
        <position position="249"/>
    </location>
</feature>
<feature type="active site" description="Nucleophile" evidence="1">
    <location>
        <position position="370"/>
    </location>
</feature>
<feature type="binding site" evidence="1">
    <location>
        <begin position="19"/>
        <end position="28"/>
    </location>
    <ligand>
        <name>substrate</name>
    </ligand>
</feature>
<feature type="binding site" evidence="1">
    <location>
        <position position="110"/>
    </location>
    <ligand>
        <name>substrate</name>
    </ligand>
</feature>
<feature type="binding site" evidence="1">
    <location>
        <begin position="137"/>
        <end position="138"/>
    </location>
    <ligand>
        <name>substrate</name>
    </ligand>
</feature>
<feature type="binding site" evidence="1">
    <location>
        <position position="213"/>
    </location>
    <ligand>
        <name>substrate</name>
    </ligand>
</feature>
<feature type="binding site" evidence="1">
    <location>
        <position position="251"/>
    </location>
    <ligand>
        <name>substrate</name>
    </ligand>
</feature>
<feature type="binding site" evidence="1">
    <location>
        <position position="364"/>
    </location>
    <ligand>
        <name>substrate</name>
    </ligand>
</feature>
<accession>B1JMD0</accession>
<organism>
    <name type="scientific">Yersinia pseudotuberculosis serotype O:3 (strain YPIII)</name>
    <dbReference type="NCBI Taxonomy" id="502800"/>
    <lineage>
        <taxon>Bacteria</taxon>
        <taxon>Pseudomonadati</taxon>
        <taxon>Pseudomonadota</taxon>
        <taxon>Gammaproteobacteria</taxon>
        <taxon>Enterobacterales</taxon>
        <taxon>Yersiniaceae</taxon>
        <taxon>Yersinia</taxon>
    </lineage>
</organism>
<gene>
    <name evidence="1" type="primary">astB</name>
    <name type="ordered locus">YPK_2226</name>
</gene>
<protein>
    <recommendedName>
        <fullName evidence="1">N-succinylarginine dihydrolase</fullName>
        <ecNumber evidence="1">3.5.3.23</ecNumber>
    </recommendedName>
</protein>
<comment type="function">
    <text evidence="1">Catalyzes the hydrolysis of N(2)-succinylarginine into N(2)-succinylornithine, ammonia and CO(2).</text>
</comment>
<comment type="catalytic activity">
    <reaction evidence="1">
        <text>N(2)-succinyl-L-arginine + 2 H2O + 2 H(+) = N(2)-succinyl-L-ornithine + 2 NH4(+) + CO2</text>
        <dbReference type="Rhea" id="RHEA:19533"/>
        <dbReference type="ChEBI" id="CHEBI:15377"/>
        <dbReference type="ChEBI" id="CHEBI:15378"/>
        <dbReference type="ChEBI" id="CHEBI:16526"/>
        <dbReference type="ChEBI" id="CHEBI:28938"/>
        <dbReference type="ChEBI" id="CHEBI:58241"/>
        <dbReference type="ChEBI" id="CHEBI:58514"/>
        <dbReference type="EC" id="3.5.3.23"/>
    </reaction>
</comment>
<comment type="pathway">
    <text evidence="1">Amino-acid degradation; L-arginine degradation via AST pathway; L-glutamate and succinate from L-arginine: step 2/5.</text>
</comment>
<comment type="subunit">
    <text evidence="1">Homodimer.</text>
</comment>
<comment type="similarity">
    <text evidence="1">Belongs to the succinylarginine dihydrolase family.</text>
</comment>
<reference key="1">
    <citation type="submission" date="2008-02" db="EMBL/GenBank/DDBJ databases">
        <title>Complete sequence of Yersinia pseudotuberculosis YPIII.</title>
        <authorList>
            <consortium name="US DOE Joint Genome Institute"/>
            <person name="Copeland A."/>
            <person name="Lucas S."/>
            <person name="Lapidus A."/>
            <person name="Glavina del Rio T."/>
            <person name="Dalin E."/>
            <person name="Tice H."/>
            <person name="Bruce D."/>
            <person name="Goodwin L."/>
            <person name="Pitluck S."/>
            <person name="Munk A.C."/>
            <person name="Brettin T."/>
            <person name="Detter J.C."/>
            <person name="Han C."/>
            <person name="Tapia R."/>
            <person name="Schmutz J."/>
            <person name="Larimer F."/>
            <person name="Land M."/>
            <person name="Hauser L."/>
            <person name="Challacombe J.F."/>
            <person name="Green L."/>
            <person name="Lindler L.E."/>
            <person name="Nikolich M.P."/>
            <person name="Richardson P."/>
        </authorList>
    </citation>
    <scope>NUCLEOTIDE SEQUENCE [LARGE SCALE GENOMIC DNA]</scope>
    <source>
        <strain>YPIII</strain>
    </source>
</reference>
<sequence length="447" mass="49234">MAGYEVNFDGLVGLTHHYAGLSFGNEASTTHQNRTSNPRLAAKQGLLKMKALADLGYKQGVLPPQERPAIGVLRKLGFSGSDEQVLSDVARNAPRLLSAVSSASSMWTANAATVSPSADSADGRVHFTVANLHNKFHRAIEAETTAVLLPAVFNNHRHFVHHDALPSVTLLGDEGAANHNRLGGEYDSPAIQMFVYGRQGMESGAVPGRYPARQTREASQAVARLHQLDPKRTVFVQQNPAVIDQGVFHNDVIAVSNRNVLFHHELAFLSSTQVMDDIRCKMAGLEQQLVNIEVPEAEVSVADAVSTYLFNSQLLHKANGKMLLVIPQESQDNPSVWRYLSELVSGDGPIDELRVFDLRESMRNGGGPACLRLRVVLNDAELQAVNSRVMLTPALFVTLNNWVDQHYRDHLQFKDLADPHLLQEGRQALDELTRILNLGPVYPFQRN</sequence>
<keyword id="KW-0056">Arginine metabolism</keyword>
<keyword id="KW-0378">Hydrolase</keyword>
<evidence type="ECO:0000255" key="1">
    <source>
        <dbReference type="HAMAP-Rule" id="MF_01172"/>
    </source>
</evidence>